<keyword id="KW-0067">ATP-binding</keyword>
<keyword id="KW-0997">Cell inner membrane</keyword>
<keyword id="KW-1003">Cell membrane</keyword>
<keyword id="KW-0406">Ion transport</keyword>
<keyword id="KW-0472">Membrane</keyword>
<keyword id="KW-0547">Nucleotide-binding</keyword>
<keyword id="KW-0630">Potassium</keyword>
<keyword id="KW-0633">Potassium transport</keyword>
<keyword id="KW-0812">Transmembrane</keyword>
<keyword id="KW-1133">Transmembrane helix</keyword>
<keyword id="KW-0813">Transport</keyword>
<protein>
    <recommendedName>
        <fullName evidence="1">Potassium-transporting ATPase KdpC subunit</fullName>
    </recommendedName>
    <alternativeName>
        <fullName evidence="1">ATP phosphohydrolase [potassium-transporting] C chain</fullName>
    </alternativeName>
    <alternativeName>
        <fullName evidence="1">Potassium-binding and translocating subunit C</fullName>
    </alternativeName>
    <alternativeName>
        <fullName evidence="1">Potassium-translocating ATPase C chain</fullName>
    </alternativeName>
</protein>
<evidence type="ECO:0000255" key="1">
    <source>
        <dbReference type="HAMAP-Rule" id="MF_00276"/>
    </source>
</evidence>
<comment type="function">
    <text evidence="1">Part of the high-affinity ATP-driven potassium transport (or Kdp) system, which catalyzes the hydrolysis of ATP coupled with the electrogenic transport of potassium into the cytoplasm. This subunit acts as a catalytic chaperone that increases the ATP-binding affinity of the ATP-hydrolyzing subunit KdpB by the formation of a transient KdpB/KdpC/ATP ternary complex.</text>
</comment>
<comment type="subunit">
    <text evidence="1">The system is composed of three essential subunits: KdpA, KdpB and KdpC.</text>
</comment>
<comment type="subcellular location">
    <subcellularLocation>
        <location evidence="1">Cell inner membrane</location>
        <topology evidence="1">Single-pass membrane protein</topology>
    </subcellularLocation>
</comment>
<comment type="similarity">
    <text evidence="1">Belongs to the KdpC family.</text>
</comment>
<dbReference type="EMBL" id="CU928162">
    <property type="protein sequence ID" value="CAR06881.1"/>
    <property type="molecule type" value="Genomic_DNA"/>
</dbReference>
<dbReference type="RefSeq" id="WP_001334152.1">
    <property type="nucleotide sequence ID" value="NC_011745.1"/>
</dbReference>
<dbReference type="SMR" id="B7MPJ9"/>
<dbReference type="KEGG" id="ecq:ECED1_0675"/>
<dbReference type="HOGENOM" id="CLU_077094_2_0_6"/>
<dbReference type="Proteomes" id="UP000000748">
    <property type="component" value="Chromosome"/>
</dbReference>
<dbReference type="GO" id="GO:0005886">
    <property type="term" value="C:plasma membrane"/>
    <property type="evidence" value="ECO:0007669"/>
    <property type="project" value="UniProtKB-SubCell"/>
</dbReference>
<dbReference type="GO" id="GO:0005524">
    <property type="term" value="F:ATP binding"/>
    <property type="evidence" value="ECO:0007669"/>
    <property type="project" value="UniProtKB-UniRule"/>
</dbReference>
<dbReference type="GO" id="GO:0008556">
    <property type="term" value="F:P-type potassium transmembrane transporter activity"/>
    <property type="evidence" value="ECO:0007669"/>
    <property type="project" value="InterPro"/>
</dbReference>
<dbReference type="HAMAP" id="MF_00276">
    <property type="entry name" value="KdpC"/>
    <property type="match status" value="1"/>
</dbReference>
<dbReference type="InterPro" id="IPR003820">
    <property type="entry name" value="KdpC"/>
</dbReference>
<dbReference type="NCBIfam" id="TIGR00681">
    <property type="entry name" value="kdpC"/>
    <property type="match status" value="1"/>
</dbReference>
<dbReference type="NCBIfam" id="NF001454">
    <property type="entry name" value="PRK00315.1"/>
    <property type="match status" value="1"/>
</dbReference>
<dbReference type="PANTHER" id="PTHR30042">
    <property type="entry name" value="POTASSIUM-TRANSPORTING ATPASE C CHAIN"/>
    <property type="match status" value="1"/>
</dbReference>
<dbReference type="PANTHER" id="PTHR30042:SF2">
    <property type="entry name" value="POTASSIUM-TRANSPORTING ATPASE KDPC SUBUNIT"/>
    <property type="match status" value="1"/>
</dbReference>
<dbReference type="Pfam" id="PF02669">
    <property type="entry name" value="KdpC"/>
    <property type="match status" value="1"/>
</dbReference>
<dbReference type="PIRSF" id="PIRSF001296">
    <property type="entry name" value="K_ATPase_KdpC"/>
    <property type="match status" value="1"/>
</dbReference>
<reference key="1">
    <citation type="journal article" date="2009" name="PLoS Genet.">
        <title>Organised genome dynamics in the Escherichia coli species results in highly diverse adaptive paths.</title>
        <authorList>
            <person name="Touchon M."/>
            <person name="Hoede C."/>
            <person name="Tenaillon O."/>
            <person name="Barbe V."/>
            <person name="Baeriswyl S."/>
            <person name="Bidet P."/>
            <person name="Bingen E."/>
            <person name="Bonacorsi S."/>
            <person name="Bouchier C."/>
            <person name="Bouvet O."/>
            <person name="Calteau A."/>
            <person name="Chiapello H."/>
            <person name="Clermont O."/>
            <person name="Cruveiller S."/>
            <person name="Danchin A."/>
            <person name="Diard M."/>
            <person name="Dossat C."/>
            <person name="Karoui M.E."/>
            <person name="Frapy E."/>
            <person name="Garry L."/>
            <person name="Ghigo J.M."/>
            <person name="Gilles A.M."/>
            <person name="Johnson J."/>
            <person name="Le Bouguenec C."/>
            <person name="Lescat M."/>
            <person name="Mangenot S."/>
            <person name="Martinez-Jehanne V."/>
            <person name="Matic I."/>
            <person name="Nassif X."/>
            <person name="Oztas S."/>
            <person name="Petit M.A."/>
            <person name="Pichon C."/>
            <person name="Rouy Z."/>
            <person name="Ruf C.S."/>
            <person name="Schneider D."/>
            <person name="Tourret J."/>
            <person name="Vacherie B."/>
            <person name="Vallenet D."/>
            <person name="Medigue C."/>
            <person name="Rocha E.P.C."/>
            <person name="Denamur E."/>
        </authorList>
    </citation>
    <scope>NUCLEOTIDE SEQUENCE [LARGE SCALE GENOMIC DNA]</scope>
    <source>
        <strain>ED1a</strain>
    </source>
</reference>
<feature type="chain" id="PRO_1000132517" description="Potassium-transporting ATPase KdpC subunit">
    <location>
        <begin position="1"/>
        <end position="190"/>
    </location>
</feature>
<feature type="transmembrane region" description="Helical" evidence="1">
    <location>
        <begin position="10"/>
        <end position="30"/>
    </location>
</feature>
<gene>
    <name evidence="1" type="primary">kdpC</name>
    <name type="ordered locus">ECED1_0675</name>
</gene>
<name>KDPC_ECO81</name>
<organism>
    <name type="scientific">Escherichia coli O81 (strain ED1a)</name>
    <dbReference type="NCBI Taxonomy" id="585397"/>
    <lineage>
        <taxon>Bacteria</taxon>
        <taxon>Pseudomonadati</taxon>
        <taxon>Pseudomonadota</taxon>
        <taxon>Gammaproteobacteria</taxon>
        <taxon>Enterobacterales</taxon>
        <taxon>Enterobacteriaceae</taxon>
        <taxon>Escherichia</taxon>
    </lineage>
</organism>
<accession>B7MPJ9</accession>
<proteinExistence type="inferred from homology"/>
<sequence length="190" mass="20310">MSGLRPALSTFLFLLLITGGVYPLLTTALGQWWFPWQANGSLIREGDTVRGSALIGQNFTGNGYFHGRPSATAEMPYNPQASGGSNLAVSNPELDKQIAARVAALRAANPNASTNVPVELVTASASGLDNNITPQAAAWQIPRVAKARNLSVEQLTQLIAKYSQQPLVKYIGQPVVNIVELNLALDKLDE</sequence>